<keyword id="KW-0067">ATP-binding</keyword>
<keyword id="KW-0997">Cell inner membrane</keyword>
<keyword id="KW-1003">Cell membrane</keyword>
<keyword id="KW-0418">Kinase</keyword>
<keyword id="KW-0472">Membrane</keyword>
<keyword id="KW-0547">Nucleotide-binding</keyword>
<keyword id="KW-0808">Transferase</keyword>
<keyword id="KW-0812">Transmembrane</keyword>
<keyword id="KW-1133">Transmembrane helix</keyword>
<keyword id="KW-0831">Ubiquinone biosynthesis</keyword>
<organism>
    <name type="scientific">Pseudomonas aeruginosa (strain UCBPP-PA14)</name>
    <dbReference type="NCBI Taxonomy" id="208963"/>
    <lineage>
        <taxon>Bacteria</taxon>
        <taxon>Pseudomonadati</taxon>
        <taxon>Pseudomonadota</taxon>
        <taxon>Gammaproteobacteria</taxon>
        <taxon>Pseudomonadales</taxon>
        <taxon>Pseudomonadaceae</taxon>
        <taxon>Pseudomonas</taxon>
    </lineage>
</organism>
<sequence>MKLLAFRRLLRIQRVVIRYRLDDLILELPMLPWWLRLLGATLPWRWLPRRKLELTRGARLRLALQDLGPIFIKFGQILSTRRDLLPDDIANELAWLQDKVPPFPPELAVKRIEEQLGAKIEQVFARFEREPLASASVAQVHAARLKSGEEVVVKVIRPNLEPVIRSDIAWLFILARLAERVSSEARRLHPVEVVSDYEKTIVDELDLLREAANASQLRRNFEGSPLLYVPQVYWDWCRPKVLVMERIYGIPVTDLETLRDQRTDFKALAERGVEIFFTQVFRDSFFHADMHPGNIFVSTRAPWSPQYIAVDCGIVGSLTDEDQDYLARNLIAFFKRDYRKVAQLHIDSGWVPAETKVNDFEAAIRTVCEPIFEKPLKDISFGQVLLRLFQTARRFNMEIQPQLVLLQKTLLNIEGLGRQLYPELDLWATAQPFLERWMRERVSPKQLLRNFQQQVEQVPHLSQMARDTLERLSQPHAHNAPPPEWKGSRHDWLGRLVGAVLLVGAAEVGLGQQLEAWPAWVMLAGGVFLILRR</sequence>
<protein>
    <recommendedName>
        <fullName evidence="1">Probable protein kinase UbiB</fullName>
        <ecNumber evidence="1">2.7.-.-</ecNumber>
    </recommendedName>
    <alternativeName>
        <fullName evidence="1">Ubiquinone biosynthesis protein UbiB</fullName>
    </alternativeName>
</protein>
<accession>Q02EV2</accession>
<reference key="1">
    <citation type="journal article" date="2006" name="Genome Biol.">
        <title>Genomic analysis reveals that Pseudomonas aeruginosa virulence is combinatorial.</title>
        <authorList>
            <person name="Lee D.G."/>
            <person name="Urbach J.M."/>
            <person name="Wu G."/>
            <person name="Liberati N.T."/>
            <person name="Feinbaum R.L."/>
            <person name="Miyata S."/>
            <person name="Diggins L.T."/>
            <person name="He J."/>
            <person name="Saucier M."/>
            <person name="Deziel E."/>
            <person name="Friedman L."/>
            <person name="Li L."/>
            <person name="Grills G."/>
            <person name="Montgomery K."/>
            <person name="Kucherlapati R."/>
            <person name="Rahme L.G."/>
            <person name="Ausubel F.M."/>
        </authorList>
    </citation>
    <scope>NUCLEOTIDE SEQUENCE [LARGE SCALE GENOMIC DNA]</scope>
    <source>
        <strain>UCBPP-PA14</strain>
    </source>
</reference>
<feature type="chain" id="PRO_1000050048" description="Probable protein kinase UbiB">
    <location>
        <begin position="1"/>
        <end position="533"/>
    </location>
</feature>
<feature type="transmembrane region" description="Helical" evidence="1">
    <location>
        <begin position="24"/>
        <end position="44"/>
    </location>
</feature>
<feature type="transmembrane region" description="Helical" evidence="1">
    <location>
        <begin position="510"/>
        <end position="530"/>
    </location>
</feature>
<feature type="domain" description="Protein kinase" evidence="1">
    <location>
        <begin position="126"/>
        <end position="494"/>
    </location>
</feature>
<feature type="active site" description="Proton acceptor" evidence="1">
    <location>
        <position position="289"/>
    </location>
</feature>
<feature type="binding site" evidence="1">
    <location>
        <begin position="132"/>
        <end position="140"/>
    </location>
    <ligand>
        <name>ATP</name>
        <dbReference type="ChEBI" id="CHEBI:30616"/>
    </ligand>
</feature>
<feature type="binding site" evidence="1">
    <location>
        <position position="154"/>
    </location>
    <ligand>
        <name>ATP</name>
        <dbReference type="ChEBI" id="CHEBI:30616"/>
    </ligand>
</feature>
<name>UBIB_PSEAB</name>
<dbReference type="EC" id="2.7.-.-" evidence="1"/>
<dbReference type="EMBL" id="CP000438">
    <property type="protein sequence ID" value="ABJ14448.1"/>
    <property type="molecule type" value="Genomic_DNA"/>
</dbReference>
<dbReference type="RefSeq" id="WP_003116128.1">
    <property type="nucleotide sequence ID" value="NZ_CP034244.1"/>
</dbReference>
<dbReference type="SMR" id="Q02EV2"/>
<dbReference type="KEGG" id="pau:PA14_66920"/>
<dbReference type="PseudoCAP" id="PA14_66920"/>
<dbReference type="HOGENOM" id="CLU_006533_0_0_6"/>
<dbReference type="BioCyc" id="PAER208963:G1G74-5646-MONOMER"/>
<dbReference type="UniPathway" id="UPA00232"/>
<dbReference type="Proteomes" id="UP000000653">
    <property type="component" value="Chromosome"/>
</dbReference>
<dbReference type="GO" id="GO:0005886">
    <property type="term" value="C:plasma membrane"/>
    <property type="evidence" value="ECO:0007669"/>
    <property type="project" value="UniProtKB-SubCell"/>
</dbReference>
<dbReference type="GO" id="GO:0005524">
    <property type="term" value="F:ATP binding"/>
    <property type="evidence" value="ECO:0007669"/>
    <property type="project" value="UniProtKB-KW"/>
</dbReference>
<dbReference type="GO" id="GO:0004672">
    <property type="term" value="F:protein kinase activity"/>
    <property type="evidence" value="ECO:0007669"/>
    <property type="project" value="UniProtKB-UniRule"/>
</dbReference>
<dbReference type="GO" id="GO:0010795">
    <property type="term" value="P:regulation of ubiquinone biosynthetic process"/>
    <property type="evidence" value="ECO:0007669"/>
    <property type="project" value="UniProtKB-UniRule"/>
</dbReference>
<dbReference type="GO" id="GO:0006744">
    <property type="term" value="P:ubiquinone biosynthetic process"/>
    <property type="evidence" value="ECO:0007669"/>
    <property type="project" value="UniProtKB-UniPathway"/>
</dbReference>
<dbReference type="CDD" id="cd13972">
    <property type="entry name" value="UbiB"/>
    <property type="match status" value="1"/>
</dbReference>
<dbReference type="HAMAP" id="MF_00414">
    <property type="entry name" value="UbiB"/>
    <property type="match status" value="1"/>
</dbReference>
<dbReference type="InterPro" id="IPR004147">
    <property type="entry name" value="ABC1_dom"/>
</dbReference>
<dbReference type="InterPro" id="IPR011009">
    <property type="entry name" value="Kinase-like_dom_sf"/>
</dbReference>
<dbReference type="InterPro" id="IPR010232">
    <property type="entry name" value="UbiB"/>
</dbReference>
<dbReference type="InterPro" id="IPR045308">
    <property type="entry name" value="UbiB_bact"/>
</dbReference>
<dbReference type="InterPro" id="IPR050154">
    <property type="entry name" value="UbiB_kinase"/>
</dbReference>
<dbReference type="NCBIfam" id="NF003404">
    <property type="entry name" value="PRK04750.1"/>
    <property type="match status" value="1"/>
</dbReference>
<dbReference type="NCBIfam" id="TIGR01982">
    <property type="entry name" value="UbiB"/>
    <property type="match status" value="1"/>
</dbReference>
<dbReference type="PANTHER" id="PTHR10566">
    <property type="entry name" value="CHAPERONE-ACTIVITY OF BC1 COMPLEX CABC1 -RELATED"/>
    <property type="match status" value="1"/>
</dbReference>
<dbReference type="PANTHER" id="PTHR10566:SF113">
    <property type="entry name" value="PROTEIN ACTIVITY OF BC1 COMPLEX KINASE 7, CHLOROPLASTIC"/>
    <property type="match status" value="1"/>
</dbReference>
<dbReference type="Pfam" id="PF03109">
    <property type="entry name" value="ABC1"/>
    <property type="match status" value="1"/>
</dbReference>
<dbReference type="SUPFAM" id="SSF56112">
    <property type="entry name" value="Protein kinase-like (PK-like)"/>
    <property type="match status" value="1"/>
</dbReference>
<proteinExistence type="inferred from homology"/>
<comment type="function">
    <text evidence="1">Is probably a protein kinase regulator of UbiI activity which is involved in aerobic coenzyme Q (ubiquinone) biosynthesis.</text>
</comment>
<comment type="pathway">
    <text>Cofactor biosynthesis; ubiquinone biosynthesis [regulation].</text>
</comment>
<comment type="subcellular location">
    <subcellularLocation>
        <location evidence="1">Cell inner membrane</location>
        <topology evidence="1">Multi-pass membrane protein</topology>
    </subcellularLocation>
</comment>
<comment type="similarity">
    <text evidence="1">Belongs to the ABC1 family. UbiB subfamily.</text>
</comment>
<evidence type="ECO:0000255" key="1">
    <source>
        <dbReference type="HAMAP-Rule" id="MF_00414"/>
    </source>
</evidence>
<gene>
    <name evidence="1" type="primary">ubiB</name>
    <name type="ordered locus">PA14_66920</name>
</gene>